<protein>
    <recommendedName>
        <fullName evidence="1">Formate-dependent phosphoribosylglycinamide formyltransferase</fullName>
        <ecNumber evidence="1">6.3.1.21</ecNumber>
    </recommendedName>
    <alternativeName>
        <fullName evidence="1">5'-phosphoribosylglycinamide transformylase 2</fullName>
    </alternativeName>
    <alternativeName>
        <fullName evidence="1">Formate-dependent GAR transformylase</fullName>
    </alternativeName>
    <alternativeName>
        <fullName evidence="1">GAR transformylase 2</fullName>
        <shortName evidence="1">GART 2</shortName>
    </alternativeName>
    <alternativeName>
        <fullName evidence="1">Non-folate glycinamide ribonucleotide transformylase</fullName>
    </alternativeName>
    <alternativeName>
        <fullName evidence="1">Phosphoribosylglycinamide formyltransferase 2</fullName>
    </alternativeName>
</protein>
<sequence length="392" mass="42427">MTLLGTALRPAATRVMLLGSGELGKEVAIECQRLGVEVIAVDRYADAPAMHVAHRSHVINMLDGDALRRVVELEKPHYIVPEIEAIATDMLIQLEEEGLNVVPCARATKLTMNREGIRRLAAEELQLPTSTYRFADSENLFREAVAAIGYPCIVKPVMSSSGKGQTFIRSAEQLAHAWEYAQQGGRAGAGRVIVEGVVKFDFEITLLTVSAVDGVHFCAPVGHRQEDGDYRESWQPQQMSPLALERAQEIARKVVLALGGYGLFGVELFVCGDEVIFSEVSPRPHDTGMVTLISQDLSEFALHVRAFLGLPVGGIRQYGPAASAVILPQLTSQNVTFDNVQNAVGADLQIRLFGKPEIDGSRRLGVALATAESVVDAIERAKHAAGQVKVQG</sequence>
<evidence type="ECO:0000255" key="1">
    <source>
        <dbReference type="HAMAP-Rule" id="MF_01643"/>
    </source>
</evidence>
<keyword id="KW-0067">ATP-binding</keyword>
<keyword id="KW-0436">Ligase</keyword>
<keyword id="KW-0460">Magnesium</keyword>
<keyword id="KW-0479">Metal-binding</keyword>
<keyword id="KW-0547">Nucleotide-binding</keyword>
<keyword id="KW-0658">Purine biosynthesis</keyword>
<comment type="function">
    <text evidence="1">Involved in the de novo purine biosynthesis. Catalyzes the transfer of formate to 5-phospho-ribosyl-glycinamide (GAR), producing 5-phospho-ribosyl-N-formylglycinamide (FGAR). Formate is provided by PurU via hydrolysis of 10-formyl-tetrahydrofolate.</text>
</comment>
<comment type="catalytic activity">
    <reaction evidence="1">
        <text>N(1)-(5-phospho-beta-D-ribosyl)glycinamide + formate + ATP = N(2)-formyl-N(1)-(5-phospho-beta-D-ribosyl)glycinamide + ADP + phosphate + H(+)</text>
        <dbReference type="Rhea" id="RHEA:24829"/>
        <dbReference type="ChEBI" id="CHEBI:15378"/>
        <dbReference type="ChEBI" id="CHEBI:15740"/>
        <dbReference type="ChEBI" id="CHEBI:30616"/>
        <dbReference type="ChEBI" id="CHEBI:43474"/>
        <dbReference type="ChEBI" id="CHEBI:143788"/>
        <dbReference type="ChEBI" id="CHEBI:147286"/>
        <dbReference type="ChEBI" id="CHEBI:456216"/>
        <dbReference type="EC" id="6.3.1.21"/>
    </reaction>
    <physiologicalReaction direction="left-to-right" evidence="1">
        <dbReference type="Rhea" id="RHEA:24830"/>
    </physiologicalReaction>
</comment>
<comment type="pathway">
    <text evidence="1">Purine metabolism; IMP biosynthesis via de novo pathway; N(2)-formyl-N(1)-(5-phospho-D-ribosyl)glycinamide from N(1)-(5-phospho-D-ribosyl)glycinamide (formate route): step 1/1.</text>
</comment>
<comment type="subunit">
    <text evidence="1">Homodimer.</text>
</comment>
<comment type="similarity">
    <text evidence="1">Belongs to the PurK/PurT family.</text>
</comment>
<reference key="1">
    <citation type="journal article" date="2006" name="Mol. Microbiol.">
        <title>Role of pathogenicity island-associated integrases in the genome plasticity of uropathogenic Escherichia coli strain 536.</title>
        <authorList>
            <person name="Hochhut B."/>
            <person name="Wilde C."/>
            <person name="Balling G."/>
            <person name="Middendorf B."/>
            <person name="Dobrindt U."/>
            <person name="Brzuszkiewicz E."/>
            <person name="Gottschalk G."/>
            <person name="Carniel E."/>
            <person name="Hacker J."/>
        </authorList>
    </citation>
    <scope>NUCLEOTIDE SEQUENCE [LARGE SCALE GENOMIC DNA]</scope>
    <source>
        <strain>536 / UPEC</strain>
    </source>
</reference>
<dbReference type="EC" id="6.3.1.21" evidence="1"/>
<dbReference type="EMBL" id="CP000247">
    <property type="protein sequence ID" value="ABG69796.1"/>
    <property type="molecule type" value="Genomic_DNA"/>
</dbReference>
<dbReference type="RefSeq" id="WP_000173466.1">
    <property type="nucleotide sequence ID" value="NC_008253.1"/>
</dbReference>
<dbReference type="SMR" id="Q0TGY3"/>
<dbReference type="KEGG" id="ecp:ECP_1793"/>
<dbReference type="HOGENOM" id="CLU_011534_1_3_6"/>
<dbReference type="UniPathway" id="UPA00074">
    <property type="reaction ID" value="UER00127"/>
</dbReference>
<dbReference type="Proteomes" id="UP000009182">
    <property type="component" value="Chromosome"/>
</dbReference>
<dbReference type="GO" id="GO:0005829">
    <property type="term" value="C:cytosol"/>
    <property type="evidence" value="ECO:0007669"/>
    <property type="project" value="TreeGrafter"/>
</dbReference>
<dbReference type="GO" id="GO:0005524">
    <property type="term" value="F:ATP binding"/>
    <property type="evidence" value="ECO:0007669"/>
    <property type="project" value="UniProtKB-UniRule"/>
</dbReference>
<dbReference type="GO" id="GO:0000287">
    <property type="term" value="F:magnesium ion binding"/>
    <property type="evidence" value="ECO:0007669"/>
    <property type="project" value="InterPro"/>
</dbReference>
<dbReference type="GO" id="GO:0043815">
    <property type="term" value="F:phosphoribosylglycinamide formyltransferase 2 activity"/>
    <property type="evidence" value="ECO:0007669"/>
    <property type="project" value="UniProtKB-UniRule"/>
</dbReference>
<dbReference type="GO" id="GO:0004644">
    <property type="term" value="F:phosphoribosylglycinamide formyltransferase activity"/>
    <property type="evidence" value="ECO:0007669"/>
    <property type="project" value="InterPro"/>
</dbReference>
<dbReference type="GO" id="GO:0006189">
    <property type="term" value="P:'de novo' IMP biosynthetic process"/>
    <property type="evidence" value="ECO:0007669"/>
    <property type="project" value="UniProtKB-UniRule"/>
</dbReference>
<dbReference type="FunFam" id="3.30.1490.20:FF:000013">
    <property type="entry name" value="Formate-dependent phosphoribosylglycinamide formyltransferase"/>
    <property type="match status" value="1"/>
</dbReference>
<dbReference type="FunFam" id="3.30.470.20:FF:000027">
    <property type="entry name" value="Formate-dependent phosphoribosylglycinamide formyltransferase"/>
    <property type="match status" value="1"/>
</dbReference>
<dbReference type="FunFam" id="3.40.50.20:FF:000007">
    <property type="entry name" value="Formate-dependent phosphoribosylglycinamide formyltransferase"/>
    <property type="match status" value="1"/>
</dbReference>
<dbReference type="Gene3D" id="3.40.50.20">
    <property type="match status" value="1"/>
</dbReference>
<dbReference type="Gene3D" id="3.30.1490.20">
    <property type="entry name" value="ATP-grasp fold, A domain"/>
    <property type="match status" value="1"/>
</dbReference>
<dbReference type="Gene3D" id="3.30.470.20">
    <property type="entry name" value="ATP-grasp fold, B domain"/>
    <property type="match status" value="1"/>
</dbReference>
<dbReference type="HAMAP" id="MF_01643">
    <property type="entry name" value="PurT"/>
    <property type="match status" value="1"/>
</dbReference>
<dbReference type="InterPro" id="IPR011761">
    <property type="entry name" value="ATP-grasp"/>
</dbReference>
<dbReference type="InterPro" id="IPR003135">
    <property type="entry name" value="ATP-grasp_carboxylate-amine"/>
</dbReference>
<dbReference type="InterPro" id="IPR013815">
    <property type="entry name" value="ATP_grasp_subdomain_1"/>
</dbReference>
<dbReference type="InterPro" id="IPR016185">
    <property type="entry name" value="PreATP-grasp_dom_sf"/>
</dbReference>
<dbReference type="InterPro" id="IPR005862">
    <property type="entry name" value="PurT"/>
</dbReference>
<dbReference type="InterPro" id="IPR054350">
    <property type="entry name" value="PurT/PurK_preATP-grasp"/>
</dbReference>
<dbReference type="InterPro" id="IPR048740">
    <property type="entry name" value="PurT_C"/>
</dbReference>
<dbReference type="InterPro" id="IPR011054">
    <property type="entry name" value="Rudment_hybrid_motif"/>
</dbReference>
<dbReference type="NCBIfam" id="NF006766">
    <property type="entry name" value="PRK09288.1"/>
    <property type="match status" value="1"/>
</dbReference>
<dbReference type="NCBIfam" id="TIGR01142">
    <property type="entry name" value="purT"/>
    <property type="match status" value="1"/>
</dbReference>
<dbReference type="PANTHER" id="PTHR43055">
    <property type="entry name" value="FORMATE-DEPENDENT PHOSPHORIBOSYLGLYCINAMIDE FORMYLTRANSFERASE"/>
    <property type="match status" value="1"/>
</dbReference>
<dbReference type="PANTHER" id="PTHR43055:SF1">
    <property type="entry name" value="FORMATE-DEPENDENT PHOSPHORIBOSYLGLYCINAMIDE FORMYLTRANSFERASE"/>
    <property type="match status" value="1"/>
</dbReference>
<dbReference type="Pfam" id="PF02222">
    <property type="entry name" value="ATP-grasp"/>
    <property type="match status" value="1"/>
</dbReference>
<dbReference type="Pfam" id="PF21244">
    <property type="entry name" value="PurT_C"/>
    <property type="match status" value="1"/>
</dbReference>
<dbReference type="Pfam" id="PF22660">
    <property type="entry name" value="RS_preATP-grasp-like"/>
    <property type="match status" value="1"/>
</dbReference>
<dbReference type="SUPFAM" id="SSF56059">
    <property type="entry name" value="Glutathione synthetase ATP-binding domain-like"/>
    <property type="match status" value="1"/>
</dbReference>
<dbReference type="SUPFAM" id="SSF52440">
    <property type="entry name" value="PreATP-grasp domain"/>
    <property type="match status" value="1"/>
</dbReference>
<dbReference type="SUPFAM" id="SSF51246">
    <property type="entry name" value="Rudiment single hybrid motif"/>
    <property type="match status" value="1"/>
</dbReference>
<dbReference type="PROSITE" id="PS50975">
    <property type="entry name" value="ATP_GRASP"/>
    <property type="match status" value="1"/>
</dbReference>
<organism>
    <name type="scientific">Escherichia coli O6:K15:H31 (strain 536 / UPEC)</name>
    <dbReference type="NCBI Taxonomy" id="362663"/>
    <lineage>
        <taxon>Bacteria</taxon>
        <taxon>Pseudomonadati</taxon>
        <taxon>Pseudomonadota</taxon>
        <taxon>Gammaproteobacteria</taxon>
        <taxon>Enterobacterales</taxon>
        <taxon>Enterobacteriaceae</taxon>
        <taxon>Escherichia</taxon>
    </lineage>
</organism>
<accession>Q0TGY3</accession>
<feature type="chain" id="PRO_0000319165" description="Formate-dependent phosphoribosylglycinamide formyltransferase">
    <location>
        <begin position="1"/>
        <end position="392"/>
    </location>
</feature>
<feature type="domain" description="ATP-grasp" evidence="1">
    <location>
        <begin position="119"/>
        <end position="308"/>
    </location>
</feature>
<feature type="binding site" evidence="1">
    <location>
        <begin position="22"/>
        <end position="23"/>
    </location>
    <ligand>
        <name>N(1)-(5-phospho-beta-D-ribosyl)glycinamide</name>
        <dbReference type="ChEBI" id="CHEBI:143788"/>
    </ligand>
</feature>
<feature type="binding site" evidence="1">
    <location>
        <position position="82"/>
    </location>
    <ligand>
        <name>N(1)-(5-phospho-beta-D-ribosyl)glycinamide</name>
        <dbReference type="ChEBI" id="CHEBI:143788"/>
    </ligand>
</feature>
<feature type="binding site" evidence="1">
    <location>
        <position position="114"/>
    </location>
    <ligand>
        <name>ATP</name>
        <dbReference type="ChEBI" id="CHEBI:30616"/>
    </ligand>
</feature>
<feature type="binding site" evidence="1">
    <location>
        <position position="155"/>
    </location>
    <ligand>
        <name>ATP</name>
        <dbReference type="ChEBI" id="CHEBI:30616"/>
    </ligand>
</feature>
<feature type="binding site" evidence="1">
    <location>
        <begin position="160"/>
        <end position="165"/>
    </location>
    <ligand>
        <name>ATP</name>
        <dbReference type="ChEBI" id="CHEBI:30616"/>
    </ligand>
</feature>
<feature type="binding site" evidence="1">
    <location>
        <begin position="195"/>
        <end position="198"/>
    </location>
    <ligand>
        <name>ATP</name>
        <dbReference type="ChEBI" id="CHEBI:30616"/>
    </ligand>
</feature>
<feature type="binding site" evidence="1">
    <location>
        <position position="203"/>
    </location>
    <ligand>
        <name>ATP</name>
        <dbReference type="ChEBI" id="CHEBI:30616"/>
    </ligand>
</feature>
<feature type="binding site" evidence="1">
    <location>
        <position position="267"/>
    </location>
    <ligand>
        <name>Mg(2+)</name>
        <dbReference type="ChEBI" id="CHEBI:18420"/>
    </ligand>
</feature>
<feature type="binding site" evidence="1">
    <location>
        <position position="279"/>
    </location>
    <ligand>
        <name>Mg(2+)</name>
        <dbReference type="ChEBI" id="CHEBI:18420"/>
    </ligand>
</feature>
<feature type="binding site" evidence="1">
    <location>
        <position position="286"/>
    </location>
    <ligand>
        <name>N(1)-(5-phospho-beta-D-ribosyl)glycinamide</name>
        <dbReference type="ChEBI" id="CHEBI:143788"/>
    </ligand>
</feature>
<feature type="binding site" evidence="1">
    <location>
        <position position="355"/>
    </location>
    <ligand>
        <name>N(1)-(5-phospho-beta-D-ribosyl)glycinamide</name>
        <dbReference type="ChEBI" id="CHEBI:143788"/>
    </ligand>
</feature>
<feature type="binding site" evidence="1">
    <location>
        <begin position="362"/>
        <end position="363"/>
    </location>
    <ligand>
        <name>N(1)-(5-phospho-beta-D-ribosyl)glycinamide</name>
        <dbReference type="ChEBI" id="CHEBI:143788"/>
    </ligand>
</feature>
<gene>
    <name evidence="1" type="primary">purT</name>
    <name type="ordered locus">ECP_1793</name>
</gene>
<proteinExistence type="inferred from homology"/>
<name>PURT_ECOL5</name>